<proteinExistence type="evidence at protein level"/>
<evidence type="ECO:0000269" key="1">
    <source>
    </source>
</evidence>
<evidence type="ECO:0000303" key="2">
    <source>
    </source>
</evidence>
<evidence type="ECO:0000305" key="3"/>
<reference evidence="3" key="1">
    <citation type="journal article" date="2010" name="Bioresour. Technol.">
        <title>Purification and characterization of a novel fibrinolytic enzyme from the polychaete, Neanthes japonica (Iznka).</title>
        <authorList>
            <person name="Deng Z."/>
            <person name="Wang S."/>
            <person name="Li Q."/>
            <person name="Ji X."/>
            <person name="Zhang L."/>
            <person name="Hong M."/>
        </authorList>
    </citation>
    <scope>PROTEIN SEQUENCE</scope>
    <scope>FUNCTION</scope>
    <scope>ACTIVITY REGULATION</scope>
    <scope>BIOPHYSICOCHEMICAL PROPERTIES</scope>
    <scope>MASS SPECTROMETRY</scope>
</reference>
<dbReference type="EC" id="3.4.21.-"/>
<dbReference type="GO" id="GO:0008236">
    <property type="term" value="F:serine-type peptidase activity"/>
    <property type="evidence" value="ECO:0007669"/>
    <property type="project" value="UniProtKB-KW"/>
</dbReference>
<dbReference type="GO" id="GO:0090729">
    <property type="term" value="F:toxin activity"/>
    <property type="evidence" value="ECO:0007669"/>
    <property type="project" value="UniProtKB-KW"/>
</dbReference>
<dbReference type="GO" id="GO:0006508">
    <property type="term" value="P:proteolysis"/>
    <property type="evidence" value="ECO:0007669"/>
    <property type="project" value="UniProtKB-KW"/>
</dbReference>
<accession>P86330</accession>
<protein>
    <recommendedName>
        <fullName evidence="2">Fibrinolytic enzyme</fullName>
        <shortName evidence="2">NJF</shortName>
        <ecNumber>3.4.21.-</ecNumber>
    </recommendedName>
</protein>
<sequence>NYLHDTVGRLWGPSRAGLLDGLDWMVGDVQSR</sequence>
<organism>
    <name type="scientific">Hediste japonica</name>
    <name type="common">Polychaete worm</name>
    <name type="synonym">Neanthes japonica</name>
    <dbReference type="NCBI Taxonomy" id="73376"/>
    <lineage>
        <taxon>Eukaryota</taxon>
        <taxon>Metazoa</taxon>
        <taxon>Spiralia</taxon>
        <taxon>Lophotrochozoa</taxon>
        <taxon>Annelida</taxon>
        <taxon>Polychaeta</taxon>
        <taxon>Errantia</taxon>
        <taxon>Phyllodocida</taxon>
        <taxon>Nereididae</taxon>
        <taxon>Hediste</taxon>
    </lineage>
</organism>
<name>FIBR_HEDJA</name>
<keyword id="KW-0903">Direct protein sequencing</keyword>
<keyword id="KW-1206">Fibrinogenolytic toxin</keyword>
<keyword id="KW-1205">Fibrinolytic toxin</keyword>
<keyword id="KW-1199">Hemostasis impairing toxin</keyword>
<keyword id="KW-0378">Hydrolase</keyword>
<keyword id="KW-0645">Protease</keyword>
<keyword id="KW-0720">Serine protease</keyword>
<keyword id="KW-0800">Toxin</keyword>
<comment type="function">
    <text evidence="1">Plasmin-like serine protease. Has fibrinolytic and fibrinogenolytic but not plasminogenolytic activity. Cleaves after Arg and Lys residues.</text>
</comment>
<comment type="activity regulation">
    <text evidence="1">Inhibited by phenylmethanesulfonyl fluoride (PMSF). Not inhibited by EDTA, EGTA, beta-mercaptoethanol, indoacetamide, benzamidine, aprotinin, pepstatin A and trypsin inhibitor.</text>
</comment>
<comment type="biophysicochemical properties">
    <phDependence>
        <text evidence="1">Optimum pH is 9.0. Activity is stable from pH 6 to 11 but decreases sharply below pH 6.</text>
    </phDependence>
    <temperatureDependence>
        <text evidence="1">Optimum temperature is 60 degrees Celsius. Activity is stable from 40 to 80 degrees Celsius.</text>
    </temperatureDependence>
</comment>
<comment type="PTM">
    <text evidence="1">The N-terminus is blocked.</text>
</comment>
<comment type="mass spectrometry"/>
<comment type="caution">
    <text evidence="1">The order of the peptides shown is unknown.</text>
</comment>
<feature type="chain" id="PRO_0000382242" description="Fibrinolytic enzyme">
    <location>
        <begin position="1" status="less than"/>
        <end position="32" status="greater than"/>
    </location>
</feature>
<feature type="non-consecutive residues" evidence="2">
    <location>
        <begin position="9"/>
        <end position="10"/>
    </location>
</feature>
<feature type="non-consecutive residues" evidence="2">
    <location>
        <begin position="15"/>
        <end position="16"/>
    </location>
</feature>
<feature type="non-terminal residue" evidence="2">
    <location>
        <position position="1"/>
    </location>
</feature>
<feature type="non-terminal residue" evidence="2">
    <location>
        <position position="32"/>
    </location>
</feature>